<sequence length="87" mass="10185">MSERNQRKVYQGRVVSDKMDKTITVVVETYKKHSLYGKRVKYSKKFKAHDENNQAKIGDIVKIMETRPLSATKRFRLVEVVEEAVII</sequence>
<comment type="function">
    <text evidence="1">One of the primary rRNA binding proteins, it binds specifically to the 5'-end of 16S ribosomal RNA.</text>
</comment>
<comment type="subunit">
    <text evidence="1">Part of the 30S ribosomal subunit.</text>
</comment>
<comment type="similarity">
    <text evidence="1">Belongs to the universal ribosomal protein uS17 family.</text>
</comment>
<dbReference type="EMBL" id="AE017333">
    <property type="protein sequence ID" value="AAU39116.1"/>
    <property type="molecule type" value="Genomic_DNA"/>
</dbReference>
<dbReference type="EMBL" id="CP000002">
    <property type="protein sequence ID" value="AAU21771.1"/>
    <property type="molecule type" value="Genomic_DNA"/>
</dbReference>
<dbReference type="RefSeq" id="WP_003178345.1">
    <property type="nucleotide sequence ID" value="NC_006322.1"/>
</dbReference>
<dbReference type="SMR" id="Q65P98"/>
<dbReference type="STRING" id="279010.BL01042"/>
<dbReference type="GeneID" id="92915200"/>
<dbReference type="KEGG" id="bld:BLi00142"/>
<dbReference type="KEGG" id="bli:BL01042"/>
<dbReference type="eggNOG" id="COG0186">
    <property type="taxonomic scope" value="Bacteria"/>
</dbReference>
<dbReference type="HOGENOM" id="CLU_073626_1_0_9"/>
<dbReference type="Proteomes" id="UP000000606">
    <property type="component" value="Chromosome"/>
</dbReference>
<dbReference type="GO" id="GO:0022627">
    <property type="term" value="C:cytosolic small ribosomal subunit"/>
    <property type="evidence" value="ECO:0007669"/>
    <property type="project" value="TreeGrafter"/>
</dbReference>
<dbReference type="GO" id="GO:0019843">
    <property type="term" value="F:rRNA binding"/>
    <property type="evidence" value="ECO:0007669"/>
    <property type="project" value="UniProtKB-UniRule"/>
</dbReference>
<dbReference type="GO" id="GO:0003735">
    <property type="term" value="F:structural constituent of ribosome"/>
    <property type="evidence" value="ECO:0007669"/>
    <property type="project" value="InterPro"/>
</dbReference>
<dbReference type="GO" id="GO:0006412">
    <property type="term" value="P:translation"/>
    <property type="evidence" value="ECO:0007669"/>
    <property type="project" value="UniProtKB-UniRule"/>
</dbReference>
<dbReference type="CDD" id="cd00364">
    <property type="entry name" value="Ribosomal_uS17"/>
    <property type="match status" value="1"/>
</dbReference>
<dbReference type="FunFam" id="2.40.50.140:FF:000026">
    <property type="entry name" value="30S ribosomal protein S17"/>
    <property type="match status" value="1"/>
</dbReference>
<dbReference type="Gene3D" id="2.40.50.140">
    <property type="entry name" value="Nucleic acid-binding proteins"/>
    <property type="match status" value="1"/>
</dbReference>
<dbReference type="HAMAP" id="MF_01345_B">
    <property type="entry name" value="Ribosomal_uS17_B"/>
    <property type="match status" value="1"/>
</dbReference>
<dbReference type="InterPro" id="IPR012340">
    <property type="entry name" value="NA-bd_OB-fold"/>
</dbReference>
<dbReference type="InterPro" id="IPR000266">
    <property type="entry name" value="Ribosomal_uS17"/>
</dbReference>
<dbReference type="InterPro" id="IPR019984">
    <property type="entry name" value="Ribosomal_uS17_bact/chlr"/>
</dbReference>
<dbReference type="InterPro" id="IPR019979">
    <property type="entry name" value="Ribosomal_uS17_CS"/>
</dbReference>
<dbReference type="NCBIfam" id="NF004123">
    <property type="entry name" value="PRK05610.1"/>
    <property type="match status" value="1"/>
</dbReference>
<dbReference type="NCBIfam" id="TIGR03635">
    <property type="entry name" value="uS17_bact"/>
    <property type="match status" value="1"/>
</dbReference>
<dbReference type="PANTHER" id="PTHR10744">
    <property type="entry name" value="40S RIBOSOMAL PROTEIN S11 FAMILY MEMBER"/>
    <property type="match status" value="1"/>
</dbReference>
<dbReference type="PANTHER" id="PTHR10744:SF1">
    <property type="entry name" value="SMALL RIBOSOMAL SUBUNIT PROTEIN US17M"/>
    <property type="match status" value="1"/>
</dbReference>
<dbReference type="Pfam" id="PF00366">
    <property type="entry name" value="Ribosomal_S17"/>
    <property type="match status" value="1"/>
</dbReference>
<dbReference type="PRINTS" id="PR00973">
    <property type="entry name" value="RIBOSOMALS17"/>
</dbReference>
<dbReference type="SUPFAM" id="SSF50249">
    <property type="entry name" value="Nucleic acid-binding proteins"/>
    <property type="match status" value="1"/>
</dbReference>
<dbReference type="PROSITE" id="PS00056">
    <property type="entry name" value="RIBOSOMAL_S17"/>
    <property type="match status" value="1"/>
</dbReference>
<feature type="chain" id="PRO_0000233423" description="Small ribosomal subunit protein uS17">
    <location>
        <begin position="1"/>
        <end position="87"/>
    </location>
</feature>
<reference key="1">
    <citation type="journal article" date="2004" name="J. Mol. Microbiol. Biotechnol.">
        <title>The complete genome sequence of Bacillus licheniformis DSM13, an organism with great industrial potential.</title>
        <authorList>
            <person name="Veith B."/>
            <person name="Herzberg C."/>
            <person name="Steckel S."/>
            <person name="Feesche J."/>
            <person name="Maurer K.H."/>
            <person name="Ehrenreich P."/>
            <person name="Baeumer S."/>
            <person name="Henne A."/>
            <person name="Liesegang H."/>
            <person name="Merkl R."/>
            <person name="Ehrenreich A."/>
            <person name="Gottschalk G."/>
        </authorList>
    </citation>
    <scope>NUCLEOTIDE SEQUENCE [LARGE SCALE GENOMIC DNA]</scope>
    <source>
        <strain>ATCC 14580 / DSM 13 / JCM 2505 / CCUG 7422 / NBRC 12200 / NCIMB 9375 / NCTC 10341 / NRRL NRS-1264 / Gibson 46</strain>
    </source>
</reference>
<reference key="2">
    <citation type="journal article" date="2004" name="Genome Biol.">
        <title>Complete genome sequence of the industrial bacterium Bacillus licheniformis and comparisons with closely related Bacillus species.</title>
        <authorList>
            <person name="Rey M.W."/>
            <person name="Ramaiya P."/>
            <person name="Nelson B.A."/>
            <person name="Brody-Karpin S.D."/>
            <person name="Zaretsky E.J."/>
            <person name="Tang M."/>
            <person name="Lopez de Leon A."/>
            <person name="Xiang H."/>
            <person name="Gusti V."/>
            <person name="Clausen I.G."/>
            <person name="Olsen P.B."/>
            <person name="Rasmussen M.D."/>
            <person name="Andersen J.T."/>
            <person name="Joergensen P.L."/>
            <person name="Larsen T.S."/>
            <person name="Sorokin A."/>
            <person name="Bolotin A."/>
            <person name="Lapidus A."/>
            <person name="Galleron N."/>
            <person name="Ehrlich S.D."/>
            <person name="Berka R.M."/>
        </authorList>
    </citation>
    <scope>NUCLEOTIDE SEQUENCE [LARGE SCALE GENOMIC DNA]</scope>
    <source>
        <strain>ATCC 14580 / DSM 13 / JCM 2505 / CCUG 7422 / NBRC 12200 / NCIMB 9375 / NCTC 10341 / NRRL NRS-1264 / Gibson 46</strain>
    </source>
</reference>
<keyword id="KW-1185">Reference proteome</keyword>
<keyword id="KW-0687">Ribonucleoprotein</keyword>
<keyword id="KW-0689">Ribosomal protein</keyword>
<keyword id="KW-0694">RNA-binding</keyword>
<keyword id="KW-0699">rRNA-binding</keyword>
<protein>
    <recommendedName>
        <fullName evidence="1">Small ribosomal subunit protein uS17</fullName>
    </recommendedName>
    <alternativeName>
        <fullName evidence="2">30S ribosomal protein S17</fullName>
    </alternativeName>
</protein>
<accession>Q65P98</accession>
<accession>Q62ZN7</accession>
<evidence type="ECO:0000255" key="1">
    <source>
        <dbReference type="HAMAP-Rule" id="MF_01345"/>
    </source>
</evidence>
<evidence type="ECO:0000305" key="2"/>
<proteinExistence type="inferred from homology"/>
<name>RS17_BACLD</name>
<organism>
    <name type="scientific">Bacillus licheniformis (strain ATCC 14580 / DSM 13 / JCM 2505 / CCUG 7422 / NBRC 12200 / NCIMB 9375 / NCTC 10341 / NRRL NRS-1264 / Gibson 46)</name>
    <dbReference type="NCBI Taxonomy" id="279010"/>
    <lineage>
        <taxon>Bacteria</taxon>
        <taxon>Bacillati</taxon>
        <taxon>Bacillota</taxon>
        <taxon>Bacilli</taxon>
        <taxon>Bacillales</taxon>
        <taxon>Bacillaceae</taxon>
        <taxon>Bacillus</taxon>
    </lineage>
</organism>
<gene>
    <name evidence="1" type="primary">rpsQ</name>
    <name type="ordered locus">BLi00142</name>
    <name type="ordered locus">BL01042</name>
</gene>